<evidence type="ECO:0000255" key="1"/>
<evidence type="ECO:0000305" key="2"/>
<protein>
    <recommendedName>
        <fullName>RH-like protein IC</fullName>
    </recommendedName>
    <alternativeName>
        <fullName>Rhesus-like protein IC</fullName>
    </alternativeName>
</protein>
<keyword id="KW-0472">Membrane</keyword>
<keyword id="KW-1185">Reference proteome</keyword>
<keyword id="KW-0812">Transmembrane</keyword>
<keyword id="KW-1133">Transmembrane helix</keyword>
<feature type="chain" id="PRO_0000168191" description="RH-like protein IC">
    <location>
        <begin position="1"/>
        <end position="417"/>
    </location>
</feature>
<feature type="transmembrane region" description="Helical" evidence="1">
    <location>
        <begin position="12"/>
        <end position="32"/>
    </location>
</feature>
<feature type="transmembrane region" description="Helical" evidence="1">
    <location>
        <begin position="44"/>
        <end position="64"/>
    </location>
</feature>
<feature type="transmembrane region" description="Helical" evidence="1">
    <location>
        <begin position="77"/>
        <end position="97"/>
    </location>
</feature>
<feature type="transmembrane region" description="Helical" evidence="1">
    <location>
        <begin position="125"/>
        <end position="145"/>
    </location>
</feature>
<feature type="transmembrane region" description="Helical" evidence="1">
    <location>
        <begin position="172"/>
        <end position="192"/>
    </location>
</feature>
<feature type="transmembrane region" description="Helical" evidence="1">
    <location>
        <begin position="203"/>
        <end position="223"/>
    </location>
</feature>
<feature type="transmembrane region" description="Helical" evidence="1">
    <location>
        <begin position="238"/>
        <end position="258"/>
    </location>
</feature>
<feature type="transmembrane region" description="Helical" evidence="1">
    <location>
        <begin position="265"/>
        <end position="285"/>
    </location>
</feature>
<feature type="transmembrane region" description="Helical" evidence="1">
    <location>
        <begin position="287"/>
        <end position="307"/>
    </location>
</feature>
<feature type="transmembrane region" description="Helical" evidence="1">
    <location>
        <begin position="331"/>
        <end position="351"/>
    </location>
</feature>
<feature type="transmembrane region" description="Helical" evidence="1">
    <location>
        <begin position="358"/>
        <end position="378"/>
    </location>
</feature>
<sequence>MSSKYPRSVRCCLPLCALTLEAALILLFYFFTHYDASLEDQKGLVASYQVGQDLTVMAAIGFGFLTSSFRRHSWSSVAFNLFMLALGVQWAILLDGFLSQFPPGKVVITLFSIRLATMSALSVLISAGAVLGYVNLVQLVVMVLVEVTALGTMRMVISNIFNTDYHMNMTHFYVFAAYFGVTVAWCLPKPLPDIKEDKDQIATIPSLSAMLGTLFLWMFWPSFNSALLRSPIERKNAVFNTYYALAVSVVTAISVSSLAHPQGKINMTYMHNAVLAGGVAVGTSCHLITSPWLAMVLGLVAGLISIGGAKCLPGCCNRVLGIHDSSVMHYNFSLLGLLGEITYIVLMVLHTVGAGNGMVGFQVLVSTGELSLALAIAVTSGLLTGLLLNLKIWKAPHAAKYFDDQVFWKFPHLAVGF</sequence>
<dbReference type="EMBL" id="L37052">
    <property type="protein sequence ID" value="AAA65626.1"/>
    <property type="molecule type" value="mRNA"/>
</dbReference>
<dbReference type="PIR" id="I37075">
    <property type="entry name" value="I37075"/>
</dbReference>
<dbReference type="SMR" id="Q28426"/>
<dbReference type="FunCoup" id="Q28426">
    <property type="interactions" value="52"/>
</dbReference>
<dbReference type="InParanoid" id="Q28426"/>
<dbReference type="Proteomes" id="UP000001519">
    <property type="component" value="Unplaced"/>
</dbReference>
<dbReference type="GO" id="GO:0005886">
    <property type="term" value="C:plasma membrane"/>
    <property type="evidence" value="ECO:0000318"/>
    <property type="project" value="GO_Central"/>
</dbReference>
<dbReference type="GO" id="GO:0008519">
    <property type="term" value="F:ammonium channel activity"/>
    <property type="evidence" value="ECO:0000318"/>
    <property type="project" value="GO_Central"/>
</dbReference>
<dbReference type="GO" id="GO:0097272">
    <property type="term" value="P:ammonium homeostasis"/>
    <property type="evidence" value="ECO:0000318"/>
    <property type="project" value="GO_Central"/>
</dbReference>
<dbReference type="GO" id="GO:0072488">
    <property type="term" value="P:ammonium transmembrane transport"/>
    <property type="evidence" value="ECO:0000318"/>
    <property type="project" value="GO_Central"/>
</dbReference>
<dbReference type="FunFam" id="1.10.3430.10:FF:000009">
    <property type="entry name" value="Blood group Rh(D) polypeptide"/>
    <property type="match status" value="1"/>
</dbReference>
<dbReference type="Gene3D" id="1.10.3430.10">
    <property type="entry name" value="Ammonium transporter AmtB like domains"/>
    <property type="match status" value="1"/>
</dbReference>
<dbReference type="InterPro" id="IPR029020">
    <property type="entry name" value="Ammonium/urea_transptr"/>
</dbReference>
<dbReference type="InterPro" id="IPR024041">
    <property type="entry name" value="NH4_transpt_AmtB-like_dom"/>
</dbReference>
<dbReference type="InterPro" id="IPR002229">
    <property type="entry name" value="RhesusRHD"/>
</dbReference>
<dbReference type="PANTHER" id="PTHR11730">
    <property type="entry name" value="AMMONIUM TRANSPORTER"/>
    <property type="match status" value="1"/>
</dbReference>
<dbReference type="PANTHER" id="PTHR11730:SF100">
    <property type="entry name" value="RH-LIKE PROTEIN IC"/>
    <property type="match status" value="1"/>
</dbReference>
<dbReference type="Pfam" id="PF00909">
    <property type="entry name" value="Ammonium_transp"/>
    <property type="match status" value="1"/>
</dbReference>
<dbReference type="PRINTS" id="PR00342">
    <property type="entry name" value="RHESUSRHD"/>
</dbReference>
<dbReference type="SUPFAM" id="SSF111352">
    <property type="entry name" value="Ammonium transporter"/>
    <property type="match status" value="1"/>
</dbReference>
<comment type="function">
    <text>May be part of an oligomeric complex which is likely to have a transport or channel function in the erythrocyte membrane.</text>
</comment>
<comment type="subcellular location">
    <subcellularLocation>
        <location>Membrane</location>
        <topology>Multi-pass membrane protein</topology>
    </subcellularLocation>
</comment>
<comment type="similarity">
    <text evidence="2">Belongs to the ammonium transporter (TC 2.A.49) family. Rh subfamily.</text>
</comment>
<proteinExistence type="evidence at transcript level"/>
<organism>
    <name type="scientific">Gorilla gorilla gorilla</name>
    <name type="common">Western lowland gorilla</name>
    <dbReference type="NCBI Taxonomy" id="9595"/>
    <lineage>
        <taxon>Eukaryota</taxon>
        <taxon>Metazoa</taxon>
        <taxon>Chordata</taxon>
        <taxon>Craniata</taxon>
        <taxon>Vertebrata</taxon>
        <taxon>Euteleostomi</taxon>
        <taxon>Mammalia</taxon>
        <taxon>Eutheria</taxon>
        <taxon>Euarchontoglires</taxon>
        <taxon>Primates</taxon>
        <taxon>Haplorrhini</taxon>
        <taxon>Catarrhini</taxon>
        <taxon>Hominidae</taxon>
        <taxon>Gorilla</taxon>
    </lineage>
</organism>
<accession>Q28426</accession>
<reference key="1">
    <citation type="journal article" date="1994" name="Biochem. Genet.">
        <title>Molecular genetics of chimpanzee Rh-related genes: their relationship with the R-C-E-F blood group system, the chimpanzee counterpart of the human rhesus system.</title>
        <authorList>
            <person name="Salvignol I."/>
            <person name="Blancher A."/>
            <person name="Calvas P."/>
            <person name="Clayton J."/>
            <person name="Socha W.W."/>
            <person name="Colin Y."/>
            <person name="Ruffie J."/>
        </authorList>
    </citation>
    <scope>NUCLEOTIDE SEQUENCE [MRNA]</scope>
    <source>
        <tissue>Bone marrow</tissue>
    </source>
</reference>
<name>RHLC_GORGO</name>